<organism>
    <name type="scientific">Leptospira borgpetersenii serovar Hardjo-bovis (strain JB197)</name>
    <dbReference type="NCBI Taxonomy" id="355277"/>
    <lineage>
        <taxon>Bacteria</taxon>
        <taxon>Pseudomonadati</taxon>
        <taxon>Spirochaetota</taxon>
        <taxon>Spirochaetia</taxon>
        <taxon>Leptospirales</taxon>
        <taxon>Leptospiraceae</taxon>
        <taxon>Leptospira</taxon>
    </lineage>
</organism>
<proteinExistence type="inferred from homology"/>
<dbReference type="EMBL" id="CP000350">
    <property type="protein sequence ID" value="ABJ75839.1"/>
    <property type="molecule type" value="Genomic_DNA"/>
</dbReference>
<dbReference type="RefSeq" id="WP_011670017.1">
    <property type="nucleotide sequence ID" value="NC_008510.1"/>
</dbReference>
<dbReference type="SMR" id="Q04TD1"/>
<dbReference type="KEGG" id="lbj:LBJ_1240"/>
<dbReference type="HOGENOM" id="CLU_130694_5_3_12"/>
<dbReference type="Proteomes" id="UP000000656">
    <property type="component" value="Chromosome 1"/>
</dbReference>
<dbReference type="GO" id="GO:0005737">
    <property type="term" value="C:cytoplasm"/>
    <property type="evidence" value="ECO:0007669"/>
    <property type="project" value="TreeGrafter"/>
</dbReference>
<dbReference type="Gene3D" id="3.30.1200.10">
    <property type="entry name" value="YggU-like"/>
    <property type="match status" value="1"/>
</dbReference>
<dbReference type="HAMAP" id="MF_00634">
    <property type="entry name" value="UPF0235"/>
    <property type="match status" value="1"/>
</dbReference>
<dbReference type="InterPro" id="IPR003746">
    <property type="entry name" value="DUF167"/>
</dbReference>
<dbReference type="InterPro" id="IPR036591">
    <property type="entry name" value="YggU-like_sf"/>
</dbReference>
<dbReference type="NCBIfam" id="TIGR00251">
    <property type="entry name" value="DUF167 family protein"/>
    <property type="match status" value="1"/>
</dbReference>
<dbReference type="PANTHER" id="PTHR13420">
    <property type="entry name" value="UPF0235 PROTEIN C15ORF40"/>
    <property type="match status" value="1"/>
</dbReference>
<dbReference type="PANTHER" id="PTHR13420:SF7">
    <property type="entry name" value="UPF0235 PROTEIN C15ORF40"/>
    <property type="match status" value="1"/>
</dbReference>
<dbReference type="Pfam" id="PF02594">
    <property type="entry name" value="DUF167"/>
    <property type="match status" value="1"/>
</dbReference>
<dbReference type="SMART" id="SM01152">
    <property type="entry name" value="DUF167"/>
    <property type="match status" value="1"/>
</dbReference>
<dbReference type="SUPFAM" id="SSF69786">
    <property type="entry name" value="YggU-like"/>
    <property type="match status" value="1"/>
</dbReference>
<evidence type="ECO:0000255" key="1">
    <source>
        <dbReference type="HAMAP-Rule" id="MF_00634"/>
    </source>
</evidence>
<comment type="similarity">
    <text evidence="1">Belongs to the UPF0235 family.</text>
</comment>
<feature type="chain" id="PRO_1000130692" description="UPF0235 protein LBJ_1240">
    <location>
        <begin position="1"/>
        <end position="73"/>
    </location>
</feature>
<protein>
    <recommendedName>
        <fullName evidence="1">UPF0235 protein LBJ_1240</fullName>
    </recommendedName>
</protein>
<gene>
    <name type="ordered locus">LBJ_1240</name>
</gene>
<name>Y1240_LEPBJ</name>
<accession>Q04TD1</accession>
<sequence length="73" mass="8326">MKFTVRVKPNSKKIFFRKEEDGSVTIAVREPALEGKANEAVIETISREMKIPKRKIRIVSGEKGKKKTIEIDP</sequence>
<reference key="1">
    <citation type="journal article" date="2006" name="Proc. Natl. Acad. Sci. U.S.A.">
        <title>Genome reduction in Leptospira borgpetersenii reflects limited transmission potential.</title>
        <authorList>
            <person name="Bulach D.M."/>
            <person name="Zuerner R.L."/>
            <person name="Wilson P."/>
            <person name="Seemann T."/>
            <person name="McGrath A."/>
            <person name="Cullen P.A."/>
            <person name="Davis J."/>
            <person name="Johnson M."/>
            <person name="Kuczek E."/>
            <person name="Alt D.P."/>
            <person name="Peterson-Burch B."/>
            <person name="Coppel R.L."/>
            <person name="Rood J.I."/>
            <person name="Davies J.K."/>
            <person name="Adler B."/>
        </authorList>
    </citation>
    <scope>NUCLEOTIDE SEQUENCE [LARGE SCALE GENOMIC DNA]</scope>
    <source>
        <strain>JB197</strain>
    </source>
</reference>